<reference key="1">
    <citation type="journal article" date="2007" name="Nature">
        <title>Evolution of genes and genomes on the Drosophila phylogeny.</title>
        <authorList>
            <consortium name="Drosophila 12 genomes consortium"/>
        </authorList>
    </citation>
    <scope>NUCLEOTIDE SEQUENCE [LARGE SCALE GENOMIC DNA]</scope>
    <source>
        <strain>Tucson 15287-2541.00</strain>
    </source>
</reference>
<name>SPAST_DROGR</name>
<evidence type="ECO:0000250" key="1">
    <source>
        <dbReference type="UniProtKB" id="Q8I0P1"/>
    </source>
</evidence>
<evidence type="ECO:0000255" key="2"/>
<evidence type="ECO:0000255" key="3">
    <source>
        <dbReference type="HAMAP-Rule" id="MF_03021"/>
    </source>
</evidence>
<evidence type="ECO:0000256" key="4">
    <source>
        <dbReference type="SAM" id="MobiDB-lite"/>
    </source>
</evidence>
<proteinExistence type="inferred from homology"/>
<accession>B4JII0</accession>
<protein>
    <recommendedName>
        <fullName evidence="3">Spastin</fullName>
        <ecNumber evidence="3">5.6.1.1</ecNumber>
    </recommendedName>
</protein>
<feature type="chain" id="PRO_0000367143" description="Spastin">
    <location>
        <begin position="1"/>
        <end position="782"/>
    </location>
</feature>
<feature type="topological domain" description="Cytoplasmic" evidence="3">
    <location>
        <begin position="1"/>
        <end position="115"/>
    </location>
</feature>
<feature type="intramembrane region" description="Helical" evidence="3">
    <location>
        <begin position="116"/>
        <end position="136"/>
    </location>
</feature>
<feature type="topological domain" description="Cytoplasmic" evidence="3">
    <location>
        <begin position="137"/>
        <end position="782"/>
    </location>
</feature>
<feature type="domain" description="MIT" evidence="2">
    <location>
        <begin position="235"/>
        <end position="310"/>
    </location>
</feature>
<feature type="region of interest" description="Required for localization to punctate cytoplasmic foci" evidence="1">
    <location>
        <begin position="1"/>
        <end position="212"/>
    </location>
</feature>
<feature type="region of interest" description="Disordered" evidence="4">
    <location>
        <begin position="1"/>
        <end position="103"/>
    </location>
</feature>
<feature type="region of interest" description="Sufficient for interaction with microtubules and microtubule severing" evidence="1">
    <location>
        <begin position="210"/>
        <end position="782"/>
    </location>
</feature>
<feature type="region of interest" description="Disordered" evidence="4">
    <location>
        <begin position="325"/>
        <end position="479"/>
    </location>
</feature>
<feature type="region of interest" description="Required for interaction with microtubules" evidence="1">
    <location>
        <begin position="465"/>
        <end position="479"/>
    </location>
</feature>
<feature type="compositionally biased region" description="Low complexity" evidence="4">
    <location>
        <begin position="8"/>
        <end position="19"/>
    </location>
</feature>
<feature type="compositionally biased region" description="Polar residues" evidence="4">
    <location>
        <begin position="25"/>
        <end position="34"/>
    </location>
</feature>
<feature type="compositionally biased region" description="Low complexity" evidence="4">
    <location>
        <begin position="44"/>
        <end position="75"/>
    </location>
</feature>
<feature type="compositionally biased region" description="Low complexity" evidence="4">
    <location>
        <begin position="84"/>
        <end position="93"/>
    </location>
</feature>
<feature type="compositionally biased region" description="Low complexity" evidence="4">
    <location>
        <begin position="334"/>
        <end position="343"/>
    </location>
</feature>
<feature type="compositionally biased region" description="Polar residues" evidence="4">
    <location>
        <begin position="408"/>
        <end position="426"/>
    </location>
</feature>
<feature type="compositionally biased region" description="Polar residues" evidence="4">
    <location>
        <begin position="447"/>
        <end position="463"/>
    </location>
</feature>
<feature type="binding site" evidence="3">
    <location>
        <begin position="547"/>
        <end position="554"/>
    </location>
    <ligand>
        <name>ATP</name>
        <dbReference type="ChEBI" id="CHEBI:30616"/>
    </ligand>
</feature>
<keyword id="KW-0067">ATP-binding</keyword>
<keyword id="KW-0131">Cell cycle</keyword>
<keyword id="KW-0132">Cell division</keyword>
<keyword id="KW-0158">Chromosome</keyword>
<keyword id="KW-0963">Cytoplasm</keyword>
<keyword id="KW-0206">Cytoskeleton</keyword>
<keyword id="KW-0217">Developmental protein</keyword>
<keyword id="KW-0221">Differentiation</keyword>
<keyword id="KW-0413">Isomerase</keyword>
<keyword id="KW-0551">Lipid droplet</keyword>
<keyword id="KW-0472">Membrane</keyword>
<keyword id="KW-0493">Microtubule</keyword>
<keyword id="KW-0498">Mitosis</keyword>
<keyword id="KW-0524">Neurogenesis</keyword>
<keyword id="KW-0547">Nucleotide-binding</keyword>
<keyword id="KW-1185">Reference proteome</keyword>
<gene>
    <name evidence="3" type="primary">spas</name>
    <name type="ORF">GH18484</name>
</gene>
<comment type="function">
    <text evidence="3">ATP-dependent microtubule severing protein. Stimulates microtubule minus-end depolymerization and poleward microtubule flux in the mitotic spindle. Regulates microtubule stability in the neuromuscular junction synapse. Involved in lipid metabolism by regulating the size and distribution of lipid droplets. Involved in axon regeneration by regulating microtubule severing.</text>
</comment>
<comment type="catalytic activity">
    <reaction evidence="3">
        <text>n ATP + n H2O + a microtubule = n ADP + n phosphate + (n+1) alpha/beta tubulin heterodimers.</text>
        <dbReference type="EC" id="5.6.1.1"/>
    </reaction>
</comment>
<comment type="subunit">
    <text evidence="3">Homohexamer. The homohexamer is stabilized by ATP-binding. The homohexamer may adopt a ring conformation through which microtubules pass prior to being severed. Interacts with microtubules. Interacts with atl; may be involved in microtubule dynamics.</text>
</comment>
<comment type="subcellular location">
    <subcellularLocation>
        <location evidence="3">Membrane</location>
        <topology evidence="3">Peripheral membrane protein</topology>
    </subcellularLocation>
    <subcellularLocation>
        <location evidence="3">Cytoplasm</location>
        <location evidence="3">Cytoskeleton</location>
        <location evidence="3">Microtubule organizing center</location>
        <location evidence="3">Centrosome</location>
    </subcellularLocation>
    <subcellularLocation>
        <location evidence="3">Cytoplasm</location>
        <location evidence="3">Cytoskeleton</location>
    </subcellularLocation>
    <subcellularLocation>
        <location evidence="3">Chromosome</location>
    </subcellularLocation>
    <subcellularLocation>
        <location evidence="3">Lipid droplet</location>
    </subcellularLocation>
    <text evidence="3">Forms an intramembrane hairpin-like structure in the membrane. Colocalizes with cellular microtubule arrays. Localizes to chromosomes from prometaphase/metaphase to anaphase, and this requires microtubules. Localizes to discrete punctate cytoplasmic foci which may correspond to secretory vesicles.</text>
</comment>
<comment type="similarity">
    <text evidence="3">Belongs to the AAA ATPase family. Spastin subfamily.</text>
</comment>
<sequence>MVRTKNQSSSSSASSSTKSPVKISGGTTNRSRSCSDALIDDGNSKSSSKPTSNNRQRTTTNNNTTAITTTPGSSPDNDDDDTTTTDADLTPTSGNAPRGGNSSVHKQNLYVVSFPIIFLFNVLRSLIYQLFCIFRYLYGASTKVIYRSPNRRDCNIEIVVQNSKEQQQQHQHQQAIIHCPLERRGNISGIEQTLAQALPQRQRAIQPLEMAGNRAGGNYSPGPGDPLLAKQKHHHRRAFEYISKALKIDEENEGHKELAIELYRKGIKELEDGIAVDCWSGRGDVWDRAQRLHDKMQTNLSMARDRLHFLALREEDLQLQRLSLKEQQQKKKSPQQQPQQQQQHTFKQPMLVGQTNSSGGSGSTKVPLRSSGYGLKPSATNISRAMPAASGRKLTIGNKRPGNLPVVNKSQTLPRNLGSKTSSTSVGAALQRQPGKTAATPPAVRRQFSSGRNTPPQRSRTPINNNAAGGSGSGASTPMVSVKGVEQKLVQLILDEIVEGGAKVEWTDIAGQDVAKQALQEMVILPSVRPELFTGLRAPAKGLLLFGPPGNGKTLLARAVATECSATFLNISAASLTSKYVGDGEKLVRALFAVARHMQPSIIFIDEVDSLLSERSSNEHEASRRLKTEFLVEFDGLPGNPDGDRIVVLAATNRPQELDEAALRRFTKRVYVSLPDVQTRELLLNRLLQKQGSPLDSDALGRLAKITEGYSGSDLTALAKDAALEPIRELNVEQVKCLDISAMRQITEKDFHNSLKRIRRSVAPQSLNSYEKWSQDYGDITI</sequence>
<dbReference type="EC" id="5.6.1.1" evidence="3"/>
<dbReference type="EMBL" id="CH916369">
    <property type="protein sequence ID" value="EDV93061.1"/>
    <property type="molecule type" value="Genomic_DNA"/>
</dbReference>
<dbReference type="SMR" id="B4JII0"/>
<dbReference type="FunCoup" id="B4JII0">
    <property type="interactions" value="1632"/>
</dbReference>
<dbReference type="STRING" id="7222.B4JII0"/>
<dbReference type="EnsemblMetazoa" id="FBtr0153898">
    <property type="protein sequence ID" value="FBpp0152390"/>
    <property type="gene ID" value="FBgn0125951"/>
</dbReference>
<dbReference type="EnsemblMetazoa" id="XM_001989963.3">
    <property type="protein sequence ID" value="XP_001989999.1"/>
    <property type="gene ID" value="LOC6563377"/>
</dbReference>
<dbReference type="GeneID" id="6563377"/>
<dbReference type="KEGG" id="dgr:6563377"/>
<dbReference type="eggNOG" id="KOG0740">
    <property type="taxonomic scope" value="Eukaryota"/>
</dbReference>
<dbReference type="HOGENOM" id="CLU_000688_21_5_1"/>
<dbReference type="InParanoid" id="B4JII0"/>
<dbReference type="OMA" id="KSREPML"/>
<dbReference type="OrthoDB" id="10251136at2759"/>
<dbReference type="PhylomeDB" id="B4JII0"/>
<dbReference type="Proteomes" id="UP000001070">
    <property type="component" value="Unassembled WGS sequence"/>
</dbReference>
<dbReference type="GO" id="GO:0005813">
    <property type="term" value="C:centrosome"/>
    <property type="evidence" value="ECO:0000250"/>
    <property type="project" value="UniProtKB"/>
</dbReference>
<dbReference type="GO" id="GO:0005694">
    <property type="term" value="C:chromosome"/>
    <property type="evidence" value="ECO:0007669"/>
    <property type="project" value="UniProtKB-SubCell"/>
</dbReference>
<dbReference type="GO" id="GO:0005811">
    <property type="term" value="C:lipid droplet"/>
    <property type="evidence" value="ECO:0007669"/>
    <property type="project" value="UniProtKB-SubCell"/>
</dbReference>
<dbReference type="GO" id="GO:0016020">
    <property type="term" value="C:membrane"/>
    <property type="evidence" value="ECO:0007669"/>
    <property type="project" value="UniProtKB-SubCell"/>
</dbReference>
<dbReference type="GO" id="GO:0005874">
    <property type="term" value="C:microtubule"/>
    <property type="evidence" value="ECO:0007669"/>
    <property type="project" value="UniProtKB-UniRule"/>
</dbReference>
<dbReference type="GO" id="GO:0031594">
    <property type="term" value="C:neuromuscular junction"/>
    <property type="evidence" value="ECO:0007669"/>
    <property type="project" value="EnsemblMetazoa"/>
</dbReference>
<dbReference type="GO" id="GO:0005819">
    <property type="term" value="C:spindle"/>
    <property type="evidence" value="ECO:0007669"/>
    <property type="project" value="UniProtKB-UniRule"/>
</dbReference>
<dbReference type="GO" id="GO:0008021">
    <property type="term" value="C:synaptic vesicle"/>
    <property type="evidence" value="ECO:0007669"/>
    <property type="project" value="EnsemblMetazoa"/>
</dbReference>
<dbReference type="GO" id="GO:0043195">
    <property type="term" value="C:terminal bouton"/>
    <property type="evidence" value="ECO:0007669"/>
    <property type="project" value="EnsemblMetazoa"/>
</dbReference>
<dbReference type="GO" id="GO:0005524">
    <property type="term" value="F:ATP binding"/>
    <property type="evidence" value="ECO:0007669"/>
    <property type="project" value="UniProtKB-UniRule"/>
</dbReference>
<dbReference type="GO" id="GO:0016887">
    <property type="term" value="F:ATP hydrolysis activity"/>
    <property type="evidence" value="ECO:0007669"/>
    <property type="project" value="InterPro"/>
</dbReference>
<dbReference type="GO" id="GO:0008017">
    <property type="term" value="F:microtubule binding"/>
    <property type="evidence" value="ECO:0000250"/>
    <property type="project" value="UniProtKB"/>
</dbReference>
<dbReference type="GO" id="GO:0008568">
    <property type="term" value="F:microtubule severing ATPase activity"/>
    <property type="evidence" value="ECO:0000250"/>
    <property type="project" value="UniProtKB"/>
</dbReference>
<dbReference type="GO" id="GO:0008344">
    <property type="term" value="P:adult locomotory behavior"/>
    <property type="evidence" value="ECO:0007669"/>
    <property type="project" value="UniProtKB-UniRule"/>
</dbReference>
<dbReference type="GO" id="GO:0051301">
    <property type="term" value="P:cell division"/>
    <property type="evidence" value="ECO:0007669"/>
    <property type="project" value="UniProtKB-KW"/>
</dbReference>
<dbReference type="GO" id="GO:0035099">
    <property type="term" value="P:hemocyte migration"/>
    <property type="evidence" value="ECO:0007669"/>
    <property type="project" value="EnsemblMetazoa"/>
</dbReference>
<dbReference type="GO" id="GO:0051013">
    <property type="term" value="P:microtubule severing"/>
    <property type="evidence" value="ECO:0000250"/>
    <property type="project" value="UniProtKB"/>
</dbReference>
<dbReference type="GO" id="GO:0007079">
    <property type="term" value="P:mitotic chromosome movement towards spindle pole"/>
    <property type="evidence" value="ECO:0007669"/>
    <property type="project" value="UniProtKB-UniRule"/>
</dbReference>
<dbReference type="GO" id="GO:0000022">
    <property type="term" value="P:mitotic spindle elongation"/>
    <property type="evidence" value="ECO:0007669"/>
    <property type="project" value="UniProtKB-UniRule"/>
</dbReference>
<dbReference type="GO" id="GO:0007026">
    <property type="term" value="P:negative regulation of microtubule depolymerization"/>
    <property type="evidence" value="ECO:0007669"/>
    <property type="project" value="EnsemblMetazoa"/>
</dbReference>
<dbReference type="GO" id="GO:1900074">
    <property type="term" value="P:negative regulation of neuromuscular synaptic transmission"/>
    <property type="evidence" value="ECO:0007669"/>
    <property type="project" value="EnsemblMetazoa"/>
</dbReference>
<dbReference type="GO" id="GO:0045886">
    <property type="term" value="P:negative regulation of synaptic assembly at neuromuscular junction"/>
    <property type="evidence" value="ECO:0007669"/>
    <property type="project" value="EnsemblMetazoa"/>
</dbReference>
<dbReference type="GO" id="GO:0007399">
    <property type="term" value="P:nervous system development"/>
    <property type="evidence" value="ECO:0007669"/>
    <property type="project" value="UniProtKB-KW"/>
</dbReference>
<dbReference type="GO" id="GO:0048691">
    <property type="term" value="P:positive regulation of axon extension involved in regeneration"/>
    <property type="evidence" value="ECO:0007669"/>
    <property type="project" value="EnsemblMetazoa"/>
</dbReference>
<dbReference type="GO" id="GO:0050775">
    <property type="term" value="P:positive regulation of dendrite morphogenesis"/>
    <property type="evidence" value="ECO:0007669"/>
    <property type="project" value="EnsemblMetazoa"/>
</dbReference>
<dbReference type="GO" id="GO:0045834">
    <property type="term" value="P:positive regulation of lipid metabolic process"/>
    <property type="evidence" value="ECO:0007669"/>
    <property type="project" value="EnsemblMetazoa"/>
</dbReference>
<dbReference type="GO" id="GO:0031117">
    <property type="term" value="P:positive regulation of microtubule depolymerization"/>
    <property type="evidence" value="ECO:0007669"/>
    <property type="project" value="UniProtKB-UniRule"/>
</dbReference>
<dbReference type="GO" id="GO:1900075">
    <property type="term" value="P:positive regulation of neuromuscular synaptic transmission"/>
    <property type="evidence" value="ECO:0007669"/>
    <property type="project" value="EnsemblMetazoa"/>
</dbReference>
<dbReference type="GO" id="GO:0045887">
    <property type="term" value="P:positive regulation of synaptic assembly at neuromuscular junction"/>
    <property type="evidence" value="ECO:0007669"/>
    <property type="project" value="EnsemblMetazoa"/>
</dbReference>
<dbReference type="GO" id="GO:0034214">
    <property type="term" value="P:protein hexamerization"/>
    <property type="evidence" value="ECO:0007669"/>
    <property type="project" value="UniProtKB-UniRule"/>
</dbReference>
<dbReference type="GO" id="GO:2000331">
    <property type="term" value="P:regulation of terminal button organization"/>
    <property type="evidence" value="ECO:0007669"/>
    <property type="project" value="EnsemblMetazoa"/>
</dbReference>
<dbReference type="CDD" id="cd02679">
    <property type="entry name" value="MIT_spastin"/>
    <property type="match status" value="1"/>
</dbReference>
<dbReference type="CDD" id="cd19524">
    <property type="entry name" value="RecA-like_spastin"/>
    <property type="match status" value="1"/>
</dbReference>
<dbReference type="FunFam" id="3.40.50.300:FF:000093">
    <property type="entry name" value="Fidgetin-like 1"/>
    <property type="match status" value="1"/>
</dbReference>
<dbReference type="FunFam" id="1.10.8.60:FF:000036">
    <property type="entry name" value="Spastin"/>
    <property type="match status" value="1"/>
</dbReference>
<dbReference type="FunFam" id="1.20.58.80:FF:000006">
    <property type="entry name" value="Spastin"/>
    <property type="match status" value="1"/>
</dbReference>
<dbReference type="Gene3D" id="1.10.8.60">
    <property type="match status" value="1"/>
</dbReference>
<dbReference type="Gene3D" id="3.40.50.300">
    <property type="entry name" value="P-loop containing nucleotide triphosphate hydrolases"/>
    <property type="match status" value="1"/>
</dbReference>
<dbReference type="Gene3D" id="1.20.58.80">
    <property type="entry name" value="Phosphotransferase system, lactose/cellobiose-type IIA subunit"/>
    <property type="match status" value="1"/>
</dbReference>
<dbReference type="HAMAP" id="MF_03021">
    <property type="entry name" value="Spastin"/>
    <property type="match status" value="1"/>
</dbReference>
<dbReference type="InterPro" id="IPR003593">
    <property type="entry name" value="AAA+_ATPase"/>
</dbReference>
<dbReference type="InterPro" id="IPR041569">
    <property type="entry name" value="AAA_lid_3"/>
</dbReference>
<dbReference type="InterPro" id="IPR003959">
    <property type="entry name" value="ATPase_AAA_core"/>
</dbReference>
<dbReference type="InterPro" id="IPR003960">
    <property type="entry name" value="ATPase_AAA_CS"/>
</dbReference>
<dbReference type="InterPro" id="IPR007330">
    <property type="entry name" value="MIT_dom"/>
</dbReference>
<dbReference type="InterPro" id="IPR050304">
    <property type="entry name" value="MT-severing_AAA_ATPase"/>
</dbReference>
<dbReference type="InterPro" id="IPR027417">
    <property type="entry name" value="P-loop_NTPase"/>
</dbReference>
<dbReference type="InterPro" id="IPR015415">
    <property type="entry name" value="Spast_Vps4_C"/>
</dbReference>
<dbReference type="InterPro" id="IPR017179">
    <property type="entry name" value="Spastin"/>
</dbReference>
<dbReference type="PANTHER" id="PTHR23074">
    <property type="entry name" value="AAA DOMAIN-CONTAINING"/>
    <property type="match status" value="1"/>
</dbReference>
<dbReference type="PANTHER" id="PTHR23074:SF86">
    <property type="entry name" value="SPASTIN"/>
    <property type="match status" value="1"/>
</dbReference>
<dbReference type="Pfam" id="PF00004">
    <property type="entry name" value="AAA"/>
    <property type="match status" value="1"/>
</dbReference>
<dbReference type="Pfam" id="PF17862">
    <property type="entry name" value="AAA_lid_3"/>
    <property type="match status" value="1"/>
</dbReference>
<dbReference type="Pfam" id="PF09336">
    <property type="entry name" value="Vps4_C"/>
    <property type="match status" value="1"/>
</dbReference>
<dbReference type="SMART" id="SM00382">
    <property type="entry name" value="AAA"/>
    <property type="match status" value="1"/>
</dbReference>
<dbReference type="SMART" id="SM00745">
    <property type="entry name" value="MIT"/>
    <property type="match status" value="1"/>
</dbReference>
<dbReference type="SUPFAM" id="SSF52540">
    <property type="entry name" value="P-loop containing nucleoside triphosphate hydrolases"/>
    <property type="match status" value="1"/>
</dbReference>
<dbReference type="PROSITE" id="PS00674">
    <property type="entry name" value="AAA"/>
    <property type="match status" value="1"/>
</dbReference>
<organism>
    <name type="scientific">Drosophila grimshawi</name>
    <name type="common">Hawaiian fruit fly</name>
    <name type="synonym">Idiomyia grimshawi</name>
    <dbReference type="NCBI Taxonomy" id="7222"/>
    <lineage>
        <taxon>Eukaryota</taxon>
        <taxon>Metazoa</taxon>
        <taxon>Ecdysozoa</taxon>
        <taxon>Arthropoda</taxon>
        <taxon>Hexapoda</taxon>
        <taxon>Insecta</taxon>
        <taxon>Pterygota</taxon>
        <taxon>Neoptera</taxon>
        <taxon>Endopterygota</taxon>
        <taxon>Diptera</taxon>
        <taxon>Brachycera</taxon>
        <taxon>Muscomorpha</taxon>
        <taxon>Ephydroidea</taxon>
        <taxon>Drosophilidae</taxon>
        <taxon>Drosophila</taxon>
        <taxon>Hawaiian Drosophila</taxon>
    </lineage>
</organism>